<keyword id="KW-0963">Cytoplasm</keyword>
<keyword id="KW-0269">Exonuclease</keyword>
<keyword id="KW-0378">Hydrolase</keyword>
<keyword id="KW-0540">Nuclease</keyword>
<keyword id="KW-1185">Reference proteome</keyword>
<organism>
    <name type="scientific">Burkholderia pseudomallei (strain K96243)</name>
    <dbReference type="NCBI Taxonomy" id="272560"/>
    <lineage>
        <taxon>Bacteria</taxon>
        <taxon>Pseudomonadati</taxon>
        <taxon>Pseudomonadota</taxon>
        <taxon>Betaproteobacteria</taxon>
        <taxon>Burkholderiales</taxon>
        <taxon>Burkholderiaceae</taxon>
        <taxon>Burkholderia</taxon>
        <taxon>pseudomallei group</taxon>
    </lineage>
</organism>
<accession>Q63S41</accession>
<sequence>MTDISAVAGQPALVRNELNLVWLDMEMTGLDPDTDRIIEIAVVVTNSTLDIAVEGPVLAIHQSDETLAKMDDWNKNTHGRSGLIDRVRASSVTEADAAAQIAAFLARHVPPGKSPMCGNSICQDRRFMARWMPELERFFHYRNLDVSTLKELCRRWQPAIYKGFQKRAMHTALADIHESIDELKYYRERFLIPAAPAGETA</sequence>
<proteinExistence type="inferred from homology"/>
<dbReference type="EC" id="3.1.15.-" evidence="1"/>
<dbReference type="EMBL" id="BX571965">
    <property type="protein sequence ID" value="CAH36487.1"/>
    <property type="molecule type" value="Genomic_DNA"/>
</dbReference>
<dbReference type="RefSeq" id="WP_004535917.1">
    <property type="nucleotide sequence ID" value="NZ_CP009538.1"/>
</dbReference>
<dbReference type="RefSeq" id="YP_109076.1">
    <property type="nucleotide sequence ID" value="NC_006350.1"/>
</dbReference>
<dbReference type="SMR" id="Q63S41"/>
<dbReference type="STRING" id="272560.BPSL2481"/>
<dbReference type="GeneID" id="93061069"/>
<dbReference type="KEGG" id="bps:BPSL2481"/>
<dbReference type="PATRIC" id="fig|272560.51.peg.2903"/>
<dbReference type="eggNOG" id="COG1949">
    <property type="taxonomic scope" value="Bacteria"/>
</dbReference>
<dbReference type="Proteomes" id="UP000000605">
    <property type="component" value="Chromosome 1"/>
</dbReference>
<dbReference type="GO" id="GO:0005737">
    <property type="term" value="C:cytoplasm"/>
    <property type="evidence" value="ECO:0007669"/>
    <property type="project" value="UniProtKB-SubCell"/>
</dbReference>
<dbReference type="GO" id="GO:0000175">
    <property type="term" value="F:3'-5'-RNA exonuclease activity"/>
    <property type="evidence" value="ECO:0007669"/>
    <property type="project" value="InterPro"/>
</dbReference>
<dbReference type="GO" id="GO:0003676">
    <property type="term" value="F:nucleic acid binding"/>
    <property type="evidence" value="ECO:0007669"/>
    <property type="project" value="InterPro"/>
</dbReference>
<dbReference type="GO" id="GO:0006259">
    <property type="term" value="P:DNA metabolic process"/>
    <property type="evidence" value="ECO:0007669"/>
    <property type="project" value="UniProtKB-ARBA"/>
</dbReference>
<dbReference type="CDD" id="cd06135">
    <property type="entry name" value="Orn"/>
    <property type="match status" value="1"/>
</dbReference>
<dbReference type="FunFam" id="3.30.420.10:FF:000003">
    <property type="entry name" value="Oligoribonuclease"/>
    <property type="match status" value="1"/>
</dbReference>
<dbReference type="Gene3D" id="3.30.420.10">
    <property type="entry name" value="Ribonuclease H-like superfamily/Ribonuclease H"/>
    <property type="match status" value="1"/>
</dbReference>
<dbReference type="HAMAP" id="MF_00045">
    <property type="entry name" value="Oligoribonuclease"/>
    <property type="match status" value="1"/>
</dbReference>
<dbReference type="InterPro" id="IPR013520">
    <property type="entry name" value="Exonuclease_RNaseT/DNA_pol3"/>
</dbReference>
<dbReference type="InterPro" id="IPR022894">
    <property type="entry name" value="Oligoribonuclease"/>
</dbReference>
<dbReference type="InterPro" id="IPR012337">
    <property type="entry name" value="RNaseH-like_sf"/>
</dbReference>
<dbReference type="InterPro" id="IPR036397">
    <property type="entry name" value="RNaseH_sf"/>
</dbReference>
<dbReference type="NCBIfam" id="NF003765">
    <property type="entry name" value="PRK05359.1"/>
    <property type="match status" value="1"/>
</dbReference>
<dbReference type="PANTHER" id="PTHR11046">
    <property type="entry name" value="OLIGORIBONUCLEASE, MITOCHONDRIAL"/>
    <property type="match status" value="1"/>
</dbReference>
<dbReference type="PANTHER" id="PTHR11046:SF0">
    <property type="entry name" value="OLIGORIBONUCLEASE, MITOCHONDRIAL"/>
    <property type="match status" value="1"/>
</dbReference>
<dbReference type="Pfam" id="PF00929">
    <property type="entry name" value="RNase_T"/>
    <property type="match status" value="1"/>
</dbReference>
<dbReference type="SMART" id="SM00479">
    <property type="entry name" value="EXOIII"/>
    <property type="match status" value="1"/>
</dbReference>
<dbReference type="SUPFAM" id="SSF53098">
    <property type="entry name" value="Ribonuclease H-like"/>
    <property type="match status" value="1"/>
</dbReference>
<reference key="1">
    <citation type="journal article" date="2004" name="Proc. Natl. Acad. Sci. U.S.A.">
        <title>Genomic plasticity of the causative agent of melioidosis, Burkholderia pseudomallei.</title>
        <authorList>
            <person name="Holden M.T.G."/>
            <person name="Titball R.W."/>
            <person name="Peacock S.J."/>
            <person name="Cerdeno-Tarraga A.-M."/>
            <person name="Atkins T."/>
            <person name="Crossman L.C."/>
            <person name="Pitt T."/>
            <person name="Churcher C."/>
            <person name="Mungall K.L."/>
            <person name="Bentley S.D."/>
            <person name="Sebaihia M."/>
            <person name="Thomson N.R."/>
            <person name="Bason N."/>
            <person name="Beacham I.R."/>
            <person name="Brooks K."/>
            <person name="Brown K.A."/>
            <person name="Brown N.F."/>
            <person name="Challis G.L."/>
            <person name="Cherevach I."/>
            <person name="Chillingworth T."/>
            <person name="Cronin A."/>
            <person name="Crossett B."/>
            <person name="Davis P."/>
            <person name="DeShazer D."/>
            <person name="Feltwell T."/>
            <person name="Fraser A."/>
            <person name="Hance Z."/>
            <person name="Hauser H."/>
            <person name="Holroyd S."/>
            <person name="Jagels K."/>
            <person name="Keith K.E."/>
            <person name="Maddison M."/>
            <person name="Moule S."/>
            <person name="Price C."/>
            <person name="Quail M.A."/>
            <person name="Rabbinowitsch E."/>
            <person name="Rutherford K."/>
            <person name="Sanders M."/>
            <person name="Simmonds M."/>
            <person name="Songsivilai S."/>
            <person name="Stevens K."/>
            <person name="Tumapa S."/>
            <person name="Vesaratchavest M."/>
            <person name="Whitehead S."/>
            <person name="Yeats C."/>
            <person name="Barrell B.G."/>
            <person name="Oyston P.C.F."/>
            <person name="Parkhill J."/>
        </authorList>
    </citation>
    <scope>NUCLEOTIDE SEQUENCE [LARGE SCALE GENOMIC DNA]</scope>
    <source>
        <strain>K96243</strain>
    </source>
</reference>
<evidence type="ECO:0000255" key="1">
    <source>
        <dbReference type="HAMAP-Rule" id="MF_00045"/>
    </source>
</evidence>
<gene>
    <name evidence="1" type="primary">orn</name>
    <name type="ordered locus">BPSL2481</name>
</gene>
<protein>
    <recommendedName>
        <fullName evidence="1">Oligoribonuclease</fullName>
        <ecNumber evidence="1">3.1.15.-</ecNumber>
    </recommendedName>
</protein>
<name>ORN_BURPS</name>
<comment type="function">
    <text evidence="1">3'-to-5' exoribonuclease specific for small oligoribonucleotides.</text>
</comment>
<comment type="subcellular location">
    <subcellularLocation>
        <location evidence="1">Cytoplasm</location>
    </subcellularLocation>
</comment>
<comment type="similarity">
    <text evidence="1">Belongs to the oligoribonuclease family.</text>
</comment>
<feature type="chain" id="PRO_0000111026" description="Oligoribonuclease">
    <location>
        <begin position="1"/>
        <end position="201"/>
    </location>
</feature>
<feature type="domain" description="Exonuclease" evidence="1">
    <location>
        <begin position="20"/>
        <end position="183"/>
    </location>
</feature>
<feature type="active site" evidence="1">
    <location>
        <position position="141"/>
    </location>
</feature>